<sequence>MSQKQRIDQQPAFVLHTYPWRETSLVVEIFSRDHGRVALVAKGARRPMSALRGVIMAFQPLLMDWSGGGEVKTLVRAEWRGGQPLLTGRALMCGYYLNELLVRLTAREDAHPALFEAYADALSQLGRGDVAPILRRFELTLLRELGYGIGLDLEGDSNRPVDPVQQYVYIIEKGPVRLAGDDEGLPGVSGQTLLDMAHGDFSRAETLFQSKALLRLLINHYLGGQPLQSRRVLKELQEL</sequence>
<accession>Q5P084</accession>
<proteinExistence type="inferred from homology"/>
<evidence type="ECO:0000255" key="1">
    <source>
        <dbReference type="HAMAP-Rule" id="MF_00201"/>
    </source>
</evidence>
<feature type="chain" id="PRO_0000204924" description="DNA repair protein RecO">
    <location>
        <begin position="1"/>
        <end position="239"/>
    </location>
</feature>
<name>RECO_AROAE</name>
<reference key="1">
    <citation type="journal article" date="2005" name="Arch. Microbiol.">
        <title>The genome sequence of an anaerobic aromatic-degrading denitrifying bacterium, strain EbN1.</title>
        <authorList>
            <person name="Rabus R."/>
            <person name="Kube M."/>
            <person name="Heider J."/>
            <person name="Beck A."/>
            <person name="Heitmann K."/>
            <person name="Widdel F."/>
            <person name="Reinhardt R."/>
        </authorList>
    </citation>
    <scope>NUCLEOTIDE SEQUENCE [LARGE SCALE GENOMIC DNA]</scope>
    <source>
        <strain>DSM 19018 / LMG 30748 / EbN1</strain>
    </source>
</reference>
<comment type="function">
    <text evidence="1">Involved in DNA repair and RecF pathway recombination.</text>
</comment>
<comment type="similarity">
    <text evidence="1">Belongs to the RecO family.</text>
</comment>
<organism>
    <name type="scientific">Aromatoleum aromaticum (strain DSM 19018 / LMG 30748 / EbN1)</name>
    <name type="common">Azoarcus sp. (strain EbN1)</name>
    <dbReference type="NCBI Taxonomy" id="76114"/>
    <lineage>
        <taxon>Bacteria</taxon>
        <taxon>Pseudomonadati</taxon>
        <taxon>Pseudomonadota</taxon>
        <taxon>Betaproteobacteria</taxon>
        <taxon>Rhodocyclales</taxon>
        <taxon>Rhodocyclaceae</taxon>
        <taxon>Aromatoleum</taxon>
    </lineage>
</organism>
<dbReference type="EMBL" id="CR555306">
    <property type="protein sequence ID" value="CAI09280.1"/>
    <property type="molecule type" value="Genomic_DNA"/>
</dbReference>
<dbReference type="RefSeq" id="WP_011238950.1">
    <property type="nucleotide sequence ID" value="NC_006513.1"/>
</dbReference>
<dbReference type="SMR" id="Q5P084"/>
<dbReference type="STRING" id="76114.ebA5541"/>
<dbReference type="KEGG" id="eba:ebA5541"/>
<dbReference type="eggNOG" id="COG1381">
    <property type="taxonomic scope" value="Bacteria"/>
</dbReference>
<dbReference type="HOGENOM" id="CLU_066645_1_0_4"/>
<dbReference type="OrthoDB" id="9804792at2"/>
<dbReference type="Proteomes" id="UP000006552">
    <property type="component" value="Chromosome"/>
</dbReference>
<dbReference type="GO" id="GO:0043590">
    <property type="term" value="C:bacterial nucleoid"/>
    <property type="evidence" value="ECO:0007669"/>
    <property type="project" value="TreeGrafter"/>
</dbReference>
<dbReference type="GO" id="GO:0006310">
    <property type="term" value="P:DNA recombination"/>
    <property type="evidence" value="ECO:0007669"/>
    <property type="project" value="UniProtKB-UniRule"/>
</dbReference>
<dbReference type="GO" id="GO:0006302">
    <property type="term" value="P:double-strand break repair"/>
    <property type="evidence" value="ECO:0007669"/>
    <property type="project" value="TreeGrafter"/>
</dbReference>
<dbReference type="Gene3D" id="2.40.50.140">
    <property type="entry name" value="Nucleic acid-binding proteins"/>
    <property type="match status" value="1"/>
</dbReference>
<dbReference type="Gene3D" id="1.20.1440.120">
    <property type="entry name" value="Recombination protein O, C-terminal domain"/>
    <property type="match status" value="1"/>
</dbReference>
<dbReference type="HAMAP" id="MF_00201">
    <property type="entry name" value="RecO"/>
    <property type="match status" value="1"/>
</dbReference>
<dbReference type="InterPro" id="IPR037278">
    <property type="entry name" value="ARFGAP/RecO"/>
</dbReference>
<dbReference type="InterPro" id="IPR022572">
    <property type="entry name" value="DNA_rep/recomb_RecO_N"/>
</dbReference>
<dbReference type="InterPro" id="IPR012340">
    <property type="entry name" value="NA-bd_OB-fold"/>
</dbReference>
<dbReference type="InterPro" id="IPR003717">
    <property type="entry name" value="RecO"/>
</dbReference>
<dbReference type="InterPro" id="IPR042242">
    <property type="entry name" value="RecO_C"/>
</dbReference>
<dbReference type="NCBIfam" id="TIGR00613">
    <property type="entry name" value="reco"/>
    <property type="match status" value="1"/>
</dbReference>
<dbReference type="PANTHER" id="PTHR33991">
    <property type="entry name" value="DNA REPAIR PROTEIN RECO"/>
    <property type="match status" value="1"/>
</dbReference>
<dbReference type="PANTHER" id="PTHR33991:SF1">
    <property type="entry name" value="DNA REPAIR PROTEIN RECO"/>
    <property type="match status" value="1"/>
</dbReference>
<dbReference type="Pfam" id="PF02565">
    <property type="entry name" value="RecO_C"/>
    <property type="match status" value="1"/>
</dbReference>
<dbReference type="Pfam" id="PF11967">
    <property type="entry name" value="RecO_N"/>
    <property type="match status" value="1"/>
</dbReference>
<dbReference type="SUPFAM" id="SSF57863">
    <property type="entry name" value="ArfGap/RecO-like zinc finger"/>
    <property type="match status" value="1"/>
</dbReference>
<dbReference type="SUPFAM" id="SSF50249">
    <property type="entry name" value="Nucleic acid-binding proteins"/>
    <property type="match status" value="1"/>
</dbReference>
<protein>
    <recommendedName>
        <fullName evidence="1">DNA repair protein RecO</fullName>
    </recommendedName>
    <alternativeName>
        <fullName evidence="1">Recombination protein O</fullName>
    </alternativeName>
</protein>
<keyword id="KW-0227">DNA damage</keyword>
<keyword id="KW-0233">DNA recombination</keyword>
<keyword id="KW-0234">DNA repair</keyword>
<keyword id="KW-1185">Reference proteome</keyword>
<gene>
    <name evidence="1" type="primary">recO</name>
    <name type="ordered locus">AZOSEA31550</name>
    <name type="ORF">ebA5541</name>
</gene>